<name>DPOL_MIMIV</name>
<reference key="1">
    <citation type="journal article" date="2005" name="Virol. J.">
        <title>A new example of viral intein in Mimivirus.</title>
        <authorList>
            <person name="Ogata H."/>
            <person name="Raoult D."/>
            <person name="Claverie J.-M."/>
        </authorList>
    </citation>
    <scope>NUCLEOTIDE SEQUENCE [GENOMIC DNA]</scope>
    <scope>DISCUSSION OF SEQUENCE</scope>
</reference>
<reference key="2">
    <citation type="journal article" date="2004" name="Science">
        <title>The 1.2-megabase genome sequence of Mimivirus.</title>
        <authorList>
            <person name="Raoult D."/>
            <person name="Audic S."/>
            <person name="Robert C."/>
            <person name="Abergel C."/>
            <person name="Renesto P."/>
            <person name="Ogata H."/>
            <person name="La Scola B."/>
            <person name="Susan M."/>
            <person name="Claverie J.-M."/>
        </authorList>
    </citation>
    <scope>NUCLEOTIDE SEQUENCE [LARGE SCALE GENOMIC DNA]</scope>
    <source>
        <strain>Rowbotham-Bradford</strain>
    </source>
</reference>
<protein>
    <recommendedName>
        <fullName>DNA polymerase</fullName>
        <ecNumber>2.7.7.7</ecNumber>
    </recommendedName>
    <component>
        <recommendedName>
            <fullName>Mimv polB intein</fullName>
        </recommendedName>
    </component>
</protein>
<organismHost>
    <name type="scientific">Acanthamoeba polyphaga</name>
    <name type="common">Amoeba</name>
    <dbReference type="NCBI Taxonomy" id="5757"/>
</organismHost>
<proteinExistence type="inferred from homology"/>
<sequence>MPSETIDSTKQFEFQISDWNSYHELDQEEEEKYVIQLFGRTEDDHDVCLKVTGYTPFFYVEIPKQWKQRQVDKFVEILKNKVQYHCKKNLDEDFDLSKSLIKYAMVKKHKFYNFRNKQLYNFLLLVFKSHTAMKEFSSILARPLEAKGLTNKPMLYQRYESNIEPHIRFMHINNLSSCGWASIDKDKLKKIPEYSNCDYSFSVNWKDVKPSNNDDRMAPFKIMGYDIECVSCDQNFPQAERPSDKIIQIGITMYRYGSMKCYEQHILTLKKCAPIEGVNVECYKKEKGLLRGFAKKIAELRPDFKTGYNNFGFDDKYIYDRILRIDKREGKKQGVNINALKNKFMDEILRTIGKVNNNYLIENEGLDRIPIYTTVKDKKISSKASRFIQIRGGTYVENGNNLKYVQSPGITYFEVKNLSSSALGDNELKFIQIPGVLSIDMMKVIQRDHRLIGYKLDNVSANFITEKADKIIEMPHNQEDSDSEKEDEDTDDKTYDVNIYTKSTKALEKDSYIQIMVNDGYSSSPLSEGAKYKVYDIQTITEKKLNEKTNKEEIFVYQAIKTKICQKDIQQLRETIKNPLLGISWTFAKDDMHHTKINEYFEEGDPKKIRQIAKYCLKDCKLVNLLLAKLEIIVNSVGMAKVCHVPLSYLFLRGQGVKIFSLVSKKCREKNFLIPVLRRKSKDNEGDEDETYEGATVITPKPNVYLSPIGVLDYSSLYPNSMRERNLSQECYVDDSKYDNLPGYIYHDVEIILKDKKGKILRNIDGTPQKEYHRFAQEIITDEQINRELKDIFDKINTVFENNVAIIQNQKYFTEKNISELIDKHKNISDSKIEDIEFDESLSDKRKNKLVDAEKDSLDKNIGFYQKIKSQIDKIKLDSKIEIDNLSKNLNEEEKSKQINKMELNTKNLISKVFSKYLITEQQREELIVLEKERAKRSVNAEKAKVYNTVDGITVRYGILPEILTELLNKRKETNGKLANEKDPFVKAILNALQLAFKVTANSLYGQTGAPTSPLYFIAIAACTTAIGRERLHYAKKTVEDNFPGSEVIYGDSVTGDTPIITRHQNGDINITTIEELGSKWKPYEIFKAHEKNSNRKFKQQSQYPTDSEVWTAKGWAKIKRVIRHKTVKKIYRVLTHTGCIDVTEDHSLLDPNQNIIKPINCQIGTELLHGFPESNNVYDNISEQEAYVWGFFMGDGSCGSYQTKNGIKYSWALNNQDLDVLNKCKKYLEETENIQFKILDTMKSSSVYKLVPIRKIKYMVNKYRKIFYDNKKYKLVPKEILNSTKDIKNSFLEGYYAADGSRKETENMGCRRCDIKGKISAQCLFYLLKSLGYNVSINIRSDKNQIYRLTFSNKKQRKNPIAIKKIQLMNETSNDHDGDYVYDLETESGSFHAGVGEMIVKNTDSIFINFHIKDENGEEKTDKEALMKTIAKCQRAAKLINQNVPKPQSIVYEKTLHPFILVAKKKYVGLLFEKSPDKYFLKSMGIVLKRRDNAPIVKIVVGGIIDNILKNRDIDKAIEYTKIVLDKLMNGEYPMDKFIISKTLKSRYKKPSTIAHKVLADRMAVRDPGNKPQINDRIPFVYIVKDMGKKKKKDILQGDLIEHPEYVIANNLKIDYLYYLEHQIINPASQILELMMDTKDVQKFFNKYIIDEQNKRKGAQSLTKWMDFSKLPKESGSKTAKKPYQSQKLQKTKSSNKSQIDPKYINLIKNKSRKHECQNMNKWISSTDKCTDDWEPIVE</sequence>
<feature type="chain" id="PRO_0000041777" description="DNA polymerase, 1st part" evidence="1">
    <location>
        <begin position="1"/>
        <end position="1052"/>
    </location>
</feature>
<feature type="chain" id="PRO_0000041778" description="Mimv polB intein" evidence="1">
    <location>
        <begin position="1053"/>
        <end position="1403"/>
    </location>
</feature>
<feature type="chain" id="PRO_0000041779" description="DNA polymerase, 2nd part" evidence="1">
    <location>
        <begin position="1404"/>
        <end position="1740"/>
    </location>
</feature>
<feature type="domain" description="DOD-type homing endonuclease" evidence="2">
    <location>
        <begin position="1189"/>
        <end position="1334"/>
    </location>
</feature>
<feature type="region of interest" description="Disordered" evidence="3">
    <location>
        <begin position="472"/>
        <end position="491"/>
    </location>
</feature>
<feature type="region of interest" description="Disordered" evidence="3">
    <location>
        <begin position="1673"/>
        <end position="1701"/>
    </location>
</feature>
<feature type="compositionally biased region" description="Acidic residues" evidence="3">
    <location>
        <begin position="480"/>
        <end position="491"/>
    </location>
</feature>
<feature type="compositionally biased region" description="Polar residues" evidence="3">
    <location>
        <begin position="1685"/>
        <end position="1700"/>
    </location>
</feature>
<comment type="catalytic activity">
    <reaction>
        <text>DNA(n) + a 2'-deoxyribonucleoside 5'-triphosphate = DNA(n+1) + diphosphate</text>
        <dbReference type="Rhea" id="RHEA:22508"/>
        <dbReference type="Rhea" id="RHEA-COMP:17339"/>
        <dbReference type="Rhea" id="RHEA-COMP:17340"/>
        <dbReference type="ChEBI" id="CHEBI:33019"/>
        <dbReference type="ChEBI" id="CHEBI:61560"/>
        <dbReference type="ChEBI" id="CHEBI:173112"/>
        <dbReference type="EC" id="2.7.7.7"/>
    </reaction>
</comment>
<comment type="PTM">
    <text evidence="4">This protein undergoes a protein self splicing that involves a post-translational excision of the intervening region (intein) followed by peptide ligation.</text>
</comment>
<comment type="similarity">
    <text evidence="4">Belongs to the DNA polymerase type-B family.</text>
</comment>
<accession>Q5UQR0</accession>
<evidence type="ECO:0000255" key="1"/>
<evidence type="ECO:0000255" key="2">
    <source>
        <dbReference type="PROSITE-ProRule" id="PRU00273"/>
    </source>
</evidence>
<evidence type="ECO:0000256" key="3">
    <source>
        <dbReference type="SAM" id="MobiDB-lite"/>
    </source>
</evidence>
<evidence type="ECO:0000305" key="4"/>
<organism>
    <name type="scientific">Acanthamoeba polyphaga mimivirus</name>
    <name type="common">APMV</name>
    <dbReference type="NCBI Taxonomy" id="212035"/>
    <lineage>
        <taxon>Viruses</taxon>
        <taxon>Varidnaviria</taxon>
        <taxon>Bamfordvirae</taxon>
        <taxon>Nucleocytoviricota</taxon>
        <taxon>Megaviricetes</taxon>
        <taxon>Imitervirales</taxon>
        <taxon>Mimiviridae</taxon>
        <taxon>Megamimivirinae</taxon>
        <taxon>Mimivirus</taxon>
        <taxon>Mimivirus bradfordmassiliense</taxon>
    </lineage>
</organism>
<keyword id="KW-0068">Autocatalytic cleavage</keyword>
<keyword id="KW-0235">DNA replication</keyword>
<keyword id="KW-0238">DNA-binding</keyword>
<keyword id="KW-0239">DNA-directed DNA polymerase</keyword>
<keyword id="KW-0548">Nucleotidyltransferase</keyword>
<keyword id="KW-0651">Protein splicing</keyword>
<keyword id="KW-1185">Reference proteome</keyword>
<keyword id="KW-0677">Repeat</keyword>
<keyword id="KW-0808">Transferase</keyword>
<keyword id="KW-1194">Viral DNA replication</keyword>
<dbReference type="EC" id="2.7.7.7"/>
<dbReference type="EMBL" id="AY606804">
    <property type="protein sequence ID" value="AAU11330.1"/>
    <property type="molecule type" value="Genomic_DNA"/>
</dbReference>
<dbReference type="EMBL" id="AY653733">
    <property type="protein sequence ID" value="AAV50591.1"/>
    <property type="molecule type" value="Genomic_DNA"/>
</dbReference>
<dbReference type="MEROPS" id="N10.007"/>
<dbReference type="KEGG" id="vg:9924939"/>
<dbReference type="Proteomes" id="UP000001134">
    <property type="component" value="Genome"/>
</dbReference>
<dbReference type="GO" id="GO:0008296">
    <property type="term" value="F:3'-5'-DNA exonuclease activity"/>
    <property type="evidence" value="ECO:0007669"/>
    <property type="project" value="TreeGrafter"/>
</dbReference>
<dbReference type="GO" id="GO:0003677">
    <property type="term" value="F:DNA binding"/>
    <property type="evidence" value="ECO:0007669"/>
    <property type="project" value="UniProtKB-KW"/>
</dbReference>
<dbReference type="GO" id="GO:0003887">
    <property type="term" value="F:DNA-directed DNA polymerase activity"/>
    <property type="evidence" value="ECO:0007669"/>
    <property type="project" value="UniProtKB-KW"/>
</dbReference>
<dbReference type="GO" id="GO:0004519">
    <property type="term" value="F:endonuclease activity"/>
    <property type="evidence" value="ECO:0007669"/>
    <property type="project" value="InterPro"/>
</dbReference>
<dbReference type="GO" id="GO:0000166">
    <property type="term" value="F:nucleotide binding"/>
    <property type="evidence" value="ECO:0007669"/>
    <property type="project" value="InterPro"/>
</dbReference>
<dbReference type="GO" id="GO:0006287">
    <property type="term" value="P:base-excision repair, gap-filling"/>
    <property type="evidence" value="ECO:0007669"/>
    <property type="project" value="TreeGrafter"/>
</dbReference>
<dbReference type="GO" id="GO:0045004">
    <property type="term" value="P:DNA replication proofreading"/>
    <property type="evidence" value="ECO:0007669"/>
    <property type="project" value="TreeGrafter"/>
</dbReference>
<dbReference type="GO" id="GO:0006297">
    <property type="term" value="P:nucleotide-excision repair, DNA gap filling"/>
    <property type="evidence" value="ECO:0007669"/>
    <property type="project" value="TreeGrafter"/>
</dbReference>
<dbReference type="GO" id="GO:0039693">
    <property type="term" value="P:viral DNA genome replication"/>
    <property type="evidence" value="ECO:0007669"/>
    <property type="project" value="UniProtKB-KW"/>
</dbReference>
<dbReference type="CDD" id="cd00081">
    <property type="entry name" value="Hint"/>
    <property type="match status" value="1"/>
</dbReference>
<dbReference type="Gene3D" id="1.10.132.60">
    <property type="entry name" value="DNA polymerase family B, C-terminal domain"/>
    <property type="match status" value="1"/>
</dbReference>
<dbReference type="Gene3D" id="3.30.342.10">
    <property type="entry name" value="DNA Polymerase, chain B, domain 1"/>
    <property type="match status" value="1"/>
</dbReference>
<dbReference type="Gene3D" id="1.10.287.690">
    <property type="entry name" value="Helix hairpin bin"/>
    <property type="match status" value="1"/>
</dbReference>
<dbReference type="Gene3D" id="3.10.28.10">
    <property type="entry name" value="Homing endonucleases"/>
    <property type="match status" value="1"/>
</dbReference>
<dbReference type="Gene3D" id="3.90.1600.10">
    <property type="entry name" value="Palm domain of DNA polymerase"/>
    <property type="match status" value="2"/>
</dbReference>
<dbReference type="Gene3D" id="3.30.420.10">
    <property type="entry name" value="Ribonuclease H-like superfamily/Ribonuclease H"/>
    <property type="match status" value="2"/>
</dbReference>
<dbReference type="InterPro" id="IPR006172">
    <property type="entry name" value="DNA-dir_DNA_pol_B"/>
</dbReference>
<dbReference type="InterPro" id="IPR006133">
    <property type="entry name" value="DNA-dir_DNA_pol_B_exonuc"/>
</dbReference>
<dbReference type="InterPro" id="IPR006134">
    <property type="entry name" value="DNA-dir_DNA_pol_B_multi_dom"/>
</dbReference>
<dbReference type="InterPro" id="IPR043502">
    <property type="entry name" value="DNA/RNA_pol_sf"/>
</dbReference>
<dbReference type="InterPro" id="IPR042087">
    <property type="entry name" value="DNA_pol_B_thumb"/>
</dbReference>
<dbReference type="InterPro" id="IPR023211">
    <property type="entry name" value="DNA_pol_palm_dom_sf"/>
</dbReference>
<dbReference type="InterPro" id="IPR050240">
    <property type="entry name" value="DNA_pol_type-B"/>
</dbReference>
<dbReference type="InterPro" id="IPR036844">
    <property type="entry name" value="Hint_dom_sf"/>
</dbReference>
<dbReference type="InterPro" id="IPR027434">
    <property type="entry name" value="Homing_endonucl"/>
</dbReference>
<dbReference type="InterPro" id="IPR030934">
    <property type="entry name" value="Intein_C"/>
</dbReference>
<dbReference type="InterPro" id="IPR004042">
    <property type="entry name" value="Intein_endonuc_central"/>
</dbReference>
<dbReference type="InterPro" id="IPR012337">
    <property type="entry name" value="RNaseH-like_sf"/>
</dbReference>
<dbReference type="InterPro" id="IPR036397">
    <property type="entry name" value="RNaseH_sf"/>
</dbReference>
<dbReference type="PANTHER" id="PTHR10322">
    <property type="entry name" value="DNA POLYMERASE CATALYTIC SUBUNIT"/>
    <property type="match status" value="1"/>
</dbReference>
<dbReference type="PANTHER" id="PTHR10322:SF23">
    <property type="entry name" value="DNA POLYMERASE DELTA CATALYTIC SUBUNIT"/>
    <property type="match status" value="1"/>
</dbReference>
<dbReference type="Pfam" id="PF00136">
    <property type="entry name" value="DNA_pol_B"/>
    <property type="match status" value="3"/>
</dbReference>
<dbReference type="Pfam" id="PF03104">
    <property type="entry name" value="DNA_pol_B_exo1"/>
    <property type="match status" value="1"/>
</dbReference>
<dbReference type="SMART" id="SM00486">
    <property type="entry name" value="POLBc"/>
    <property type="match status" value="1"/>
</dbReference>
<dbReference type="SUPFAM" id="SSF56672">
    <property type="entry name" value="DNA/RNA polymerases"/>
    <property type="match status" value="1"/>
</dbReference>
<dbReference type="SUPFAM" id="SSF51294">
    <property type="entry name" value="Hedgehog/intein (Hint) domain"/>
    <property type="match status" value="1"/>
</dbReference>
<dbReference type="SUPFAM" id="SSF55608">
    <property type="entry name" value="Homing endonucleases"/>
    <property type="match status" value="1"/>
</dbReference>
<dbReference type="SUPFAM" id="SSF53098">
    <property type="entry name" value="Ribonuclease H-like"/>
    <property type="match status" value="1"/>
</dbReference>
<dbReference type="PROSITE" id="PS50818">
    <property type="entry name" value="INTEIN_C_TER"/>
    <property type="match status" value="1"/>
</dbReference>
<dbReference type="PROSITE" id="PS50819">
    <property type="entry name" value="INTEIN_ENDONUCLEASE"/>
    <property type="match status" value="1"/>
</dbReference>
<gene>
    <name type="primary">POLB</name>
    <name type="ordered locus">MIMI_R322</name>
</gene>